<name>CHB_VIBHA</name>
<organism>
    <name type="scientific">Vibrio harveyi</name>
    <name type="common">Beneckea harveyi</name>
    <dbReference type="NCBI Taxonomy" id="669"/>
    <lineage>
        <taxon>Bacteria</taxon>
        <taxon>Pseudomonadati</taxon>
        <taxon>Pseudomonadota</taxon>
        <taxon>Gammaproteobacteria</taxon>
        <taxon>Vibrionales</taxon>
        <taxon>Vibrionaceae</taxon>
        <taxon>Vibrio</taxon>
    </lineage>
</organism>
<reference key="1">
    <citation type="journal article" date="1989" name="J. Biol. Chem.">
        <title>N,N'-diacetylchitobiase of Vibrio harveyi. Primary structure, processing, and evolutionary relationships.</title>
        <authorList>
            <person name="Soto-Gil R.W."/>
            <person name="Zysking J.W."/>
        </authorList>
    </citation>
    <scope>NUCLEOTIDE SEQUENCE [GENOMIC DNA]</scope>
    <scope>DIACYLGLYCEROL AT CYS-18</scope>
</reference>
<evidence type="ECO:0000250" key="1"/>
<evidence type="ECO:0000255" key="2">
    <source>
        <dbReference type="PROSITE-ProRule" id="PRU00303"/>
    </source>
</evidence>
<evidence type="ECO:0000269" key="3">
    <source>
    </source>
</evidence>
<evidence type="ECO:0000305" key="4"/>
<keyword id="KW-0119">Carbohydrate metabolism</keyword>
<keyword id="KW-0998">Cell outer membrane</keyword>
<keyword id="KW-0146">Chitin degradation</keyword>
<keyword id="KW-1015">Disulfide bond</keyword>
<keyword id="KW-0326">Glycosidase</keyword>
<keyword id="KW-0378">Hydrolase</keyword>
<keyword id="KW-0449">Lipoprotein</keyword>
<keyword id="KW-0472">Membrane</keyword>
<keyword id="KW-0564">Palmitate</keyword>
<keyword id="KW-0624">Polysaccharide degradation</keyword>
<keyword id="KW-0732">Signal</keyword>
<sequence>MLKHSLIAASVITTLAGCSSLQSSEQQVVNSLADNLDIQYEVLTNHGANEGLACQDMGAEWASCNKVNMTLVNQGEAVDSKDWAIYFHSIRLILDVDNEQFKISRVTGDLHKLEPTDKFDGFAAGEEVVLPLVGEYWQLFETDFMPGAFVSAPNAEPKMIASLNTEDVASFVTGLEGNNLKRTPDDNNVFANAVSRFEKNEDLATQDVSTTLLPTPMHVEAGKGKVDIADGIALPKDAFDATQFAAIQDRAEVVGVDVRGDLPVSITVVPADFTGELAKSGAYEMSIKGDGIVIKAFDQAGAFYAVQSIFGLVDSQNADSLPQLSIKDAPRFDYRGVMVDVARNFHSKDAILATLDQMAAYKMNKLHLHLTDDEGWRLEIPGLPELTEVGANRCFDTQEKSCLLPQLGSGPTTDNFGSGYFSKADYVEILKYAKARNIEVIPEIDMPAHARAAVVSMEARYDRLMEEGKEAEANEYRLMDPQDTSNVTTVQFYNKQSFINPCMESSTRFVDKVISEVAAMHQEAGAPLTTWHFGGDEAKNIKLGAGFQDVNAEDKVSWKGTIDLSKQDKPFAQSPQCQTLITDGTVSDFAHLPSHFAEEVSKIVAEKGIPNFQAWQDGLKYSDGEKAFATENTRVNFWDVLYWGGTSSVYEWSKKGYDVIVSNPDYVYMDMPYEVDPKERGYYWATRATDTRKMFGFAPENMPQNAETSVDRDGNGFTGKGEIEAKPFYGLSAQLWSETVRNDEQYEYMVFPRVLAAAQRAWHRADWENDYKVGVEYSQNSNLVDKASLNQDYNRFANVLGQRELAKLEKSGIDYRLPVPGAKVEDGKLAMNVQFPGVTLQYSLDGENWLTYADNARPNVTGEVFIRSVSATGEKVSRITSVK</sequence>
<protein>
    <recommendedName>
        <fullName>N,N'-diacetylchitobiase</fullName>
        <shortName>Chitobiase</shortName>
        <ecNumber>3.2.1.52</ecNumber>
    </recommendedName>
    <alternativeName>
        <fullName>Beta-N-acetylhexosaminidase</fullName>
    </alternativeName>
    <alternativeName>
        <fullName>N-acetyl-beta-glucosaminidase</fullName>
    </alternativeName>
</protein>
<gene>
    <name type="primary">chb</name>
</gene>
<accession>P13670</accession>
<feature type="signal peptide">
    <location>
        <begin position="1"/>
        <end position="17"/>
    </location>
</feature>
<feature type="chain" id="PRO_0000012019" description="N,N'-diacetylchitobiase">
    <location>
        <begin position="18"/>
        <end position="883"/>
    </location>
</feature>
<feature type="active site" description="Proton donor" evidence="1">
    <location>
        <position position="537"/>
    </location>
</feature>
<feature type="lipid moiety-binding region" description="N-palmitoyl cysteine" evidence="4">
    <location>
        <position position="18"/>
    </location>
</feature>
<feature type="lipid moiety-binding region" description="S-diacylglycerol cysteine" evidence="2 3">
    <location>
        <position position="18"/>
    </location>
</feature>
<feature type="disulfide bond" evidence="1">
    <location>
        <begin position="54"/>
        <end position="64"/>
    </location>
</feature>
<feature type="disulfide bond" evidence="1">
    <location>
        <begin position="394"/>
        <end position="402"/>
    </location>
</feature>
<feature type="disulfide bond" evidence="1">
    <location>
        <begin position="502"/>
        <end position="577"/>
    </location>
</feature>
<comment type="function">
    <text>Hydrolysis of terminal, non-reducing N-acetyl-beta-D-glucosamine residues in chitobiose and higher analogs, and in glycoproteins.</text>
</comment>
<comment type="catalytic activity">
    <reaction>
        <text>Hydrolysis of terminal non-reducing N-acetyl-D-hexosamine residues in N-acetyl-beta-D-hexosaminides.</text>
        <dbReference type="EC" id="3.2.1.52"/>
    </reaction>
</comment>
<comment type="pathway">
    <text>Glycan degradation; chitin degradation.</text>
</comment>
<comment type="subcellular location">
    <subcellularLocation>
        <location>Cell outer membrane</location>
        <topology>Lipid-anchor</topology>
    </subcellularLocation>
</comment>
<comment type="induction">
    <text>By chitobiose.</text>
</comment>
<comment type="PTM">
    <text>This protein is probably a lipoprotein, its processing is inhibited by globomycin.</text>
</comment>
<comment type="similarity">
    <text evidence="4">Belongs to the glycosyl hydrolase 20 family.</text>
</comment>
<proteinExistence type="evidence at protein level"/>
<dbReference type="EC" id="3.2.1.52"/>
<dbReference type="EMBL" id="J05004">
    <property type="protein sequence ID" value="AAA88682.1"/>
    <property type="molecule type" value="Genomic_DNA"/>
</dbReference>
<dbReference type="PIR" id="A36511">
    <property type="entry name" value="A36511"/>
</dbReference>
<dbReference type="SMR" id="P13670"/>
<dbReference type="STRING" id="669.AL538_13335"/>
<dbReference type="CAZy" id="GH20">
    <property type="family name" value="Glycoside Hydrolase Family 20"/>
</dbReference>
<dbReference type="UniPathway" id="UPA00349"/>
<dbReference type="GO" id="GO:0009279">
    <property type="term" value="C:cell outer membrane"/>
    <property type="evidence" value="ECO:0007669"/>
    <property type="project" value="UniProtKB-SubCell"/>
</dbReference>
<dbReference type="GO" id="GO:0004563">
    <property type="term" value="F:beta-N-acetylhexosaminidase activity"/>
    <property type="evidence" value="ECO:0007669"/>
    <property type="project" value="UniProtKB-EC"/>
</dbReference>
<dbReference type="GO" id="GO:0030247">
    <property type="term" value="F:polysaccharide binding"/>
    <property type="evidence" value="ECO:0007669"/>
    <property type="project" value="InterPro"/>
</dbReference>
<dbReference type="GO" id="GO:0006032">
    <property type="term" value="P:chitin catabolic process"/>
    <property type="evidence" value="ECO:0007669"/>
    <property type="project" value="UniProtKB-UniPathway"/>
</dbReference>
<dbReference type="GO" id="GO:0030203">
    <property type="term" value="P:glycosaminoglycan metabolic process"/>
    <property type="evidence" value="ECO:0007669"/>
    <property type="project" value="TreeGrafter"/>
</dbReference>
<dbReference type="GO" id="GO:0000272">
    <property type="term" value="P:polysaccharide catabolic process"/>
    <property type="evidence" value="ECO:0007669"/>
    <property type="project" value="UniProtKB-KW"/>
</dbReference>
<dbReference type="CDD" id="cd02847">
    <property type="entry name" value="E_set_Chitobiase_C"/>
    <property type="match status" value="1"/>
</dbReference>
<dbReference type="CDD" id="cd06569">
    <property type="entry name" value="GH20_Sm-chitobiase-like"/>
    <property type="match status" value="1"/>
</dbReference>
<dbReference type="FunFam" id="3.20.20.80:FF:000216">
    <property type="entry name" value="Beta-N-acetylhexosaminidase"/>
    <property type="match status" value="1"/>
</dbReference>
<dbReference type="Gene3D" id="2.60.40.290">
    <property type="match status" value="1"/>
</dbReference>
<dbReference type="Gene3D" id="3.30.379.10">
    <property type="entry name" value="Chitobiase/beta-hexosaminidase domain 2-like"/>
    <property type="match status" value="1"/>
</dbReference>
<dbReference type="Gene3D" id="3.20.20.80">
    <property type="entry name" value="Glycosidases"/>
    <property type="match status" value="1"/>
</dbReference>
<dbReference type="Gene3D" id="2.60.40.10">
    <property type="entry name" value="Immunoglobulins"/>
    <property type="match status" value="1"/>
</dbReference>
<dbReference type="InterPro" id="IPR025705">
    <property type="entry name" value="Beta_hexosaminidase_sua/sub"/>
</dbReference>
<dbReference type="InterPro" id="IPR008965">
    <property type="entry name" value="CBM2/CBM3_carb-bd_dom_sf"/>
</dbReference>
<dbReference type="InterPro" id="IPR012291">
    <property type="entry name" value="CBM2_carb-bd_dom_sf"/>
</dbReference>
<dbReference type="InterPro" id="IPR004866">
    <property type="entry name" value="CHB/HEX_N_dom"/>
</dbReference>
<dbReference type="InterPro" id="IPR004867">
    <property type="entry name" value="CHB_C_dom"/>
</dbReference>
<dbReference type="InterPro" id="IPR015883">
    <property type="entry name" value="Glyco_hydro_20_cat"/>
</dbReference>
<dbReference type="InterPro" id="IPR017853">
    <property type="entry name" value="Glycoside_hydrolase_SF"/>
</dbReference>
<dbReference type="InterPro" id="IPR029018">
    <property type="entry name" value="Hex-like_dom2"/>
</dbReference>
<dbReference type="InterPro" id="IPR015882">
    <property type="entry name" value="HEX_bac_N"/>
</dbReference>
<dbReference type="InterPro" id="IPR013783">
    <property type="entry name" value="Ig-like_fold"/>
</dbReference>
<dbReference type="InterPro" id="IPR014756">
    <property type="entry name" value="Ig_E-set"/>
</dbReference>
<dbReference type="PANTHER" id="PTHR22600">
    <property type="entry name" value="BETA-HEXOSAMINIDASE"/>
    <property type="match status" value="1"/>
</dbReference>
<dbReference type="PANTHER" id="PTHR22600:SF57">
    <property type="entry name" value="BETA-N-ACETYLHEXOSAMINIDASE"/>
    <property type="match status" value="1"/>
</dbReference>
<dbReference type="Pfam" id="PF03173">
    <property type="entry name" value="CHB_HEX"/>
    <property type="match status" value="1"/>
</dbReference>
<dbReference type="Pfam" id="PF03174">
    <property type="entry name" value="CHB_HEX_C"/>
    <property type="match status" value="1"/>
</dbReference>
<dbReference type="Pfam" id="PF00728">
    <property type="entry name" value="Glyco_hydro_20"/>
    <property type="match status" value="1"/>
</dbReference>
<dbReference type="Pfam" id="PF02838">
    <property type="entry name" value="Glyco_hydro_20b"/>
    <property type="match status" value="1"/>
</dbReference>
<dbReference type="PRINTS" id="PR00738">
    <property type="entry name" value="GLHYDRLASE20"/>
</dbReference>
<dbReference type="SMART" id="SM01081">
    <property type="entry name" value="CHB_HEX"/>
    <property type="match status" value="1"/>
</dbReference>
<dbReference type="SUPFAM" id="SSF51445">
    <property type="entry name" value="(Trans)glycosidases"/>
    <property type="match status" value="1"/>
</dbReference>
<dbReference type="SUPFAM" id="SSF55545">
    <property type="entry name" value="beta-N-acetylhexosaminidase-like domain"/>
    <property type="match status" value="1"/>
</dbReference>
<dbReference type="SUPFAM" id="SSF49384">
    <property type="entry name" value="Carbohydrate-binding domain"/>
    <property type="match status" value="1"/>
</dbReference>
<dbReference type="SUPFAM" id="SSF81296">
    <property type="entry name" value="E set domains"/>
    <property type="match status" value="1"/>
</dbReference>
<dbReference type="PROSITE" id="PS51257">
    <property type="entry name" value="PROKAR_LIPOPROTEIN"/>
    <property type="match status" value="1"/>
</dbReference>